<evidence type="ECO:0000255" key="1">
    <source>
        <dbReference type="HAMAP-Rule" id="MF_01060"/>
    </source>
</evidence>
<evidence type="ECO:0000256" key="2">
    <source>
        <dbReference type="SAM" id="MobiDB-lite"/>
    </source>
</evidence>
<accession>B7N408</accession>
<organism>
    <name type="scientific">Escherichia coli O17:K52:H18 (strain UMN026 / ExPEC)</name>
    <dbReference type="NCBI Taxonomy" id="585056"/>
    <lineage>
        <taxon>Bacteria</taxon>
        <taxon>Pseudomonadati</taxon>
        <taxon>Pseudomonadota</taxon>
        <taxon>Gammaproteobacteria</taxon>
        <taxon>Enterobacterales</taxon>
        <taxon>Enterobacteriaceae</taxon>
        <taxon>Escherichia</taxon>
    </lineage>
</organism>
<protein>
    <recommendedName>
        <fullName evidence="1">Periplasmic trehalase</fullName>
        <ecNumber evidence="1">3.2.1.28</ecNumber>
    </recommendedName>
    <alternativeName>
        <fullName evidence="1">Alpha,alpha-trehalase</fullName>
    </alternativeName>
    <alternativeName>
        <fullName evidence="1">Alpha,alpha-trehalose glucohydrolase</fullName>
    </alternativeName>
</protein>
<proteinExistence type="inferred from homology"/>
<comment type="function">
    <text evidence="1">Provides the cells with the ability to utilize trehalose at high osmolarity by splitting it into glucose molecules that can subsequently be taken up by the phosphotransferase-mediated uptake system.</text>
</comment>
<comment type="catalytic activity">
    <reaction evidence="1">
        <text>alpha,alpha-trehalose + H2O = alpha-D-glucose + beta-D-glucose</text>
        <dbReference type="Rhea" id="RHEA:32675"/>
        <dbReference type="ChEBI" id="CHEBI:15377"/>
        <dbReference type="ChEBI" id="CHEBI:15903"/>
        <dbReference type="ChEBI" id="CHEBI:16551"/>
        <dbReference type="ChEBI" id="CHEBI:17925"/>
        <dbReference type="EC" id="3.2.1.28"/>
    </reaction>
</comment>
<comment type="subunit">
    <text evidence="1">Monomer.</text>
</comment>
<comment type="subcellular location">
    <subcellularLocation>
        <location evidence="1">Periplasm</location>
    </subcellularLocation>
</comment>
<comment type="similarity">
    <text evidence="1">Belongs to the glycosyl hydrolase 37 family.</text>
</comment>
<name>TREA_ECOLU</name>
<dbReference type="EC" id="3.2.1.28" evidence="1"/>
<dbReference type="EMBL" id="CU928163">
    <property type="protein sequence ID" value="CAR12701.1"/>
    <property type="molecule type" value="Genomic_DNA"/>
</dbReference>
<dbReference type="RefSeq" id="WP_000841738.1">
    <property type="nucleotide sequence ID" value="NC_011751.1"/>
</dbReference>
<dbReference type="RefSeq" id="YP_002412238.1">
    <property type="nucleotide sequence ID" value="NC_011751.1"/>
</dbReference>
<dbReference type="SMR" id="B7N408"/>
<dbReference type="STRING" id="585056.ECUMN_1493"/>
<dbReference type="CAZy" id="GH37">
    <property type="family name" value="Glycoside Hydrolase Family 37"/>
</dbReference>
<dbReference type="KEGG" id="eum:ECUMN_1493"/>
<dbReference type="PATRIC" id="fig|585056.7.peg.1690"/>
<dbReference type="HOGENOM" id="CLU_006451_3_1_6"/>
<dbReference type="Proteomes" id="UP000007097">
    <property type="component" value="Chromosome"/>
</dbReference>
<dbReference type="GO" id="GO:0042597">
    <property type="term" value="C:periplasmic space"/>
    <property type="evidence" value="ECO:0007669"/>
    <property type="project" value="UniProtKB-SubCell"/>
</dbReference>
<dbReference type="GO" id="GO:0004555">
    <property type="term" value="F:alpha,alpha-trehalase activity"/>
    <property type="evidence" value="ECO:0007669"/>
    <property type="project" value="UniProtKB-UniRule"/>
</dbReference>
<dbReference type="GO" id="GO:0071474">
    <property type="term" value="P:cellular hyperosmotic response"/>
    <property type="evidence" value="ECO:0007669"/>
    <property type="project" value="InterPro"/>
</dbReference>
<dbReference type="GO" id="GO:0005993">
    <property type="term" value="P:trehalose catabolic process"/>
    <property type="evidence" value="ECO:0007669"/>
    <property type="project" value="InterPro"/>
</dbReference>
<dbReference type="FunFam" id="1.50.10.10:FF:000003">
    <property type="entry name" value="Cytoplasmic trehalase"/>
    <property type="match status" value="1"/>
</dbReference>
<dbReference type="Gene3D" id="1.50.10.10">
    <property type="match status" value="1"/>
</dbReference>
<dbReference type="HAMAP" id="MF_01060">
    <property type="entry name" value="Peripl_trehalase"/>
    <property type="match status" value="1"/>
</dbReference>
<dbReference type="InterPro" id="IPR008928">
    <property type="entry name" value="6-hairpin_glycosidase_sf"/>
</dbReference>
<dbReference type="InterPro" id="IPR012341">
    <property type="entry name" value="6hp_glycosidase-like_sf"/>
</dbReference>
<dbReference type="InterPro" id="IPR001661">
    <property type="entry name" value="Glyco_hydro_37"/>
</dbReference>
<dbReference type="InterPro" id="IPR018232">
    <property type="entry name" value="Glyco_hydro_37_CS"/>
</dbReference>
<dbReference type="InterPro" id="IPR023720">
    <property type="entry name" value="Trehalase_periplasmic"/>
</dbReference>
<dbReference type="NCBIfam" id="NF009773">
    <property type="entry name" value="PRK13270.1"/>
    <property type="match status" value="1"/>
</dbReference>
<dbReference type="NCBIfam" id="NF009774">
    <property type="entry name" value="PRK13271.1"/>
    <property type="match status" value="1"/>
</dbReference>
<dbReference type="PANTHER" id="PTHR23403">
    <property type="entry name" value="TREHALASE"/>
    <property type="match status" value="1"/>
</dbReference>
<dbReference type="PANTHER" id="PTHR23403:SF1">
    <property type="entry name" value="TREHALASE"/>
    <property type="match status" value="1"/>
</dbReference>
<dbReference type="Pfam" id="PF01204">
    <property type="entry name" value="Trehalase"/>
    <property type="match status" value="1"/>
</dbReference>
<dbReference type="PRINTS" id="PR00744">
    <property type="entry name" value="GLHYDRLASE37"/>
</dbReference>
<dbReference type="SUPFAM" id="SSF48208">
    <property type="entry name" value="Six-hairpin glycosidases"/>
    <property type="match status" value="1"/>
</dbReference>
<dbReference type="PROSITE" id="PS00927">
    <property type="entry name" value="TREHALASE_1"/>
    <property type="match status" value="1"/>
</dbReference>
<dbReference type="PROSITE" id="PS00928">
    <property type="entry name" value="TREHALASE_2"/>
    <property type="match status" value="1"/>
</dbReference>
<keyword id="KW-0326">Glycosidase</keyword>
<keyword id="KW-0378">Hydrolase</keyword>
<keyword id="KW-0574">Periplasm</keyword>
<keyword id="KW-0732">Signal</keyword>
<reference key="1">
    <citation type="journal article" date="2009" name="PLoS Genet.">
        <title>Organised genome dynamics in the Escherichia coli species results in highly diverse adaptive paths.</title>
        <authorList>
            <person name="Touchon M."/>
            <person name="Hoede C."/>
            <person name="Tenaillon O."/>
            <person name="Barbe V."/>
            <person name="Baeriswyl S."/>
            <person name="Bidet P."/>
            <person name="Bingen E."/>
            <person name="Bonacorsi S."/>
            <person name="Bouchier C."/>
            <person name="Bouvet O."/>
            <person name="Calteau A."/>
            <person name="Chiapello H."/>
            <person name="Clermont O."/>
            <person name="Cruveiller S."/>
            <person name="Danchin A."/>
            <person name="Diard M."/>
            <person name="Dossat C."/>
            <person name="Karoui M.E."/>
            <person name="Frapy E."/>
            <person name="Garry L."/>
            <person name="Ghigo J.M."/>
            <person name="Gilles A.M."/>
            <person name="Johnson J."/>
            <person name="Le Bouguenec C."/>
            <person name="Lescat M."/>
            <person name="Mangenot S."/>
            <person name="Martinez-Jehanne V."/>
            <person name="Matic I."/>
            <person name="Nassif X."/>
            <person name="Oztas S."/>
            <person name="Petit M.A."/>
            <person name="Pichon C."/>
            <person name="Rouy Z."/>
            <person name="Ruf C.S."/>
            <person name="Schneider D."/>
            <person name="Tourret J."/>
            <person name="Vacherie B."/>
            <person name="Vallenet D."/>
            <person name="Medigue C."/>
            <person name="Rocha E.P.C."/>
            <person name="Denamur E."/>
        </authorList>
    </citation>
    <scope>NUCLEOTIDE SEQUENCE [LARGE SCALE GENOMIC DNA]</scope>
    <source>
        <strain>UMN026 / ExPEC</strain>
    </source>
</reference>
<gene>
    <name evidence="1" type="primary">treA</name>
    <name type="ordered locus">ECUMN_1493</name>
</gene>
<sequence>MKSPAPSRPQKMALIPACIFLCFAALSVQAEETSVTPQPPDILLGPLFNDVQNAKLFPDQKTFADAVPNSDPLMILADYRMQQNQSGFDLRHFVNVNFTLPKEGEKYVPPEGQSLREHIDGLWPVLTRSTENTEKWDSLLPLPEPYVVPGGRFREVYYWDSYFTMLGLAESGHWDKVADMVANFAHEIDTYGHIPNGNRSYYLSRSQPPFFALMVELLAQHEGDAALKQYLPQMQKEYAYWMDGVENLQAGQQEKRVVKLQDGTLLNRYWDDRDTPRPESWVEDIATAKSNPNRPATEIYRDLRSAAASGWDFSSRWMDNPQQLNTLRTTSIVPVDLNSLMFKMEKILARASKAAGDNAMANQYETLANARQKGIEKYLWNDQQGWYADYDLKSHKVRNQLTAAALFPLYVNAAAKDRASKMATATKTHLLQPGGLNTTSVKSGQQWDAPNGWAPLQWVATEGLQNYGQNEVAMDISWHFLTNVQHTYDREKKLVEKYDVSTTGTGGGGGEYPLQDGFGWTNGVTLKMLDLICPKEQPCDNVPATRPLSESTTQPVKQKEAEPTP</sequence>
<feature type="signal peptide" evidence="1">
    <location>
        <begin position="1"/>
        <end position="30"/>
    </location>
</feature>
<feature type="chain" id="PRO_1000136420" description="Periplasmic trehalase">
    <location>
        <begin position="31"/>
        <end position="565"/>
    </location>
</feature>
<feature type="region of interest" description="Disordered" evidence="2">
    <location>
        <begin position="539"/>
        <end position="565"/>
    </location>
</feature>
<feature type="active site" description="Proton donor/acceptor" evidence="1">
    <location>
        <position position="312"/>
    </location>
</feature>
<feature type="active site" description="Proton donor/acceptor" evidence="1">
    <location>
        <position position="496"/>
    </location>
</feature>
<feature type="binding site" evidence="1">
    <location>
        <position position="152"/>
    </location>
    <ligand>
        <name>substrate</name>
    </ligand>
</feature>
<feature type="binding site" evidence="1">
    <location>
        <begin position="159"/>
        <end position="160"/>
    </location>
    <ligand>
        <name>substrate</name>
    </ligand>
</feature>
<feature type="binding site" evidence="1">
    <location>
        <position position="196"/>
    </location>
    <ligand>
        <name>substrate</name>
    </ligand>
</feature>
<feature type="binding site" evidence="1">
    <location>
        <begin position="205"/>
        <end position="207"/>
    </location>
    <ligand>
        <name>substrate</name>
    </ligand>
</feature>
<feature type="binding site" evidence="1">
    <location>
        <begin position="277"/>
        <end position="279"/>
    </location>
    <ligand>
        <name>substrate</name>
    </ligand>
</feature>
<feature type="binding site" evidence="1">
    <location>
        <position position="310"/>
    </location>
    <ligand>
        <name>substrate</name>
    </ligand>
</feature>
<feature type="binding site" evidence="1">
    <location>
        <position position="511"/>
    </location>
    <ligand>
        <name>substrate</name>
    </ligand>
</feature>